<proteinExistence type="inferred from homology"/>
<evidence type="ECO:0000255" key="1">
    <source>
        <dbReference type="HAMAP-Rule" id="MF_03123"/>
    </source>
</evidence>
<evidence type="ECO:0000255" key="2">
    <source>
        <dbReference type="PROSITE-ProRule" id="PRU01266"/>
    </source>
</evidence>
<evidence type="ECO:0000256" key="3">
    <source>
        <dbReference type="SAM" id="MobiDB-lite"/>
    </source>
</evidence>
<comment type="function">
    <text evidence="1">Catalyzes the radical-mediated insertion of two sulfur atoms into the C-6 and C-8 positions of the octanoyl moiety bound to the lipoyl domains of lipoate-dependent enzymes, thereby converting the octanoylated domains into lipoylated derivatives.</text>
</comment>
<comment type="catalytic activity">
    <reaction evidence="1">
        <text>[[Fe-S] cluster scaffold protein carrying a second [4Fe-4S](2+) cluster] + N(6)-octanoyl-L-lysyl-[protein] + 2 oxidized [2Fe-2S]-[ferredoxin] + 2 S-adenosyl-L-methionine + 4 H(+) = [[Fe-S] cluster scaffold protein] + N(6)-[(R)-dihydrolipoyl]-L-lysyl-[protein] + 4 Fe(3+) + 2 hydrogen sulfide + 2 5'-deoxyadenosine + 2 L-methionine + 2 reduced [2Fe-2S]-[ferredoxin]</text>
        <dbReference type="Rhea" id="RHEA:16585"/>
        <dbReference type="Rhea" id="RHEA-COMP:9928"/>
        <dbReference type="Rhea" id="RHEA-COMP:10000"/>
        <dbReference type="Rhea" id="RHEA-COMP:10001"/>
        <dbReference type="Rhea" id="RHEA-COMP:10475"/>
        <dbReference type="Rhea" id="RHEA-COMP:14568"/>
        <dbReference type="Rhea" id="RHEA-COMP:14569"/>
        <dbReference type="ChEBI" id="CHEBI:15378"/>
        <dbReference type="ChEBI" id="CHEBI:17319"/>
        <dbReference type="ChEBI" id="CHEBI:29034"/>
        <dbReference type="ChEBI" id="CHEBI:29919"/>
        <dbReference type="ChEBI" id="CHEBI:33722"/>
        <dbReference type="ChEBI" id="CHEBI:33737"/>
        <dbReference type="ChEBI" id="CHEBI:33738"/>
        <dbReference type="ChEBI" id="CHEBI:57844"/>
        <dbReference type="ChEBI" id="CHEBI:59789"/>
        <dbReference type="ChEBI" id="CHEBI:78809"/>
        <dbReference type="ChEBI" id="CHEBI:83100"/>
        <dbReference type="EC" id="2.8.1.8"/>
    </reaction>
</comment>
<comment type="cofactor">
    <cofactor evidence="1">
        <name>[4Fe-4S] cluster</name>
        <dbReference type="ChEBI" id="CHEBI:49883"/>
    </cofactor>
    <text evidence="1">Binds 2 [4Fe-4S] clusters per subunit. One cluster is coordinated with 3 cysteines and an exchangeable S-adenosyl-L-methionine.</text>
</comment>
<comment type="pathway">
    <text evidence="1">Protein modification; protein lipoylation via endogenous pathway; protein N(6)-(lipoyl)lysine from octanoyl-[acyl-carrier-protein]: step 2/2.</text>
</comment>
<comment type="subcellular location">
    <subcellularLocation>
        <location evidence="1">Mitochondrion</location>
    </subcellularLocation>
</comment>
<comment type="similarity">
    <text evidence="1">Belongs to the radical SAM superfamily. Lipoyl synthase family.</text>
</comment>
<feature type="transit peptide" description="Mitochondrion" evidence="1">
    <location>
        <begin position="1"/>
        <end position="34"/>
    </location>
</feature>
<feature type="chain" id="PRO_0000398294" description="Lipoyl synthase, mitochondrial">
    <location>
        <begin position="35"/>
        <end position="422"/>
    </location>
</feature>
<feature type="domain" description="Radical SAM core" evidence="2">
    <location>
        <begin position="160"/>
        <end position="372"/>
    </location>
</feature>
<feature type="region of interest" description="Disordered" evidence="3">
    <location>
        <begin position="37"/>
        <end position="70"/>
    </location>
</feature>
<feature type="compositionally biased region" description="Polar residues" evidence="3">
    <location>
        <begin position="37"/>
        <end position="48"/>
    </location>
</feature>
<feature type="binding site" evidence="1">
    <location>
        <position position="146"/>
    </location>
    <ligand>
        <name>[4Fe-4S] cluster</name>
        <dbReference type="ChEBI" id="CHEBI:49883"/>
        <label>1</label>
    </ligand>
</feature>
<feature type="binding site" evidence="1">
    <location>
        <position position="151"/>
    </location>
    <ligand>
        <name>[4Fe-4S] cluster</name>
        <dbReference type="ChEBI" id="CHEBI:49883"/>
        <label>1</label>
    </ligand>
</feature>
<feature type="binding site" evidence="1">
    <location>
        <position position="157"/>
    </location>
    <ligand>
        <name>[4Fe-4S] cluster</name>
        <dbReference type="ChEBI" id="CHEBI:49883"/>
        <label>1</label>
    </ligand>
</feature>
<feature type="binding site" evidence="1">
    <location>
        <position position="177"/>
    </location>
    <ligand>
        <name>[4Fe-4S] cluster</name>
        <dbReference type="ChEBI" id="CHEBI:49883"/>
        <label>2</label>
        <note>4Fe-4S-S-AdoMet</note>
    </ligand>
</feature>
<feature type="binding site" evidence="1">
    <location>
        <position position="181"/>
    </location>
    <ligand>
        <name>[4Fe-4S] cluster</name>
        <dbReference type="ChEBI" id="CHEBI:49883"/>
        <label>2</label>
        <note>4Fe-4S-S-AdoMet</note>
    </ligand>
</feature>
<feature type="binding site" evidence="1">
    <location>
        <position position="184"/>
    </location>
    <ligand>
        <name>[4Fe-4S] cluster</name>
        <dbReference type="ChEBI" id="CHEBI:49883"/>
        <label>2</label>
        <note>4Fe-4S-S-AdoMet</note>
    </ligand>
</feature>
<feature type="binding site" evidence="1">
    <location>
        <position position="383"/>
    </location>
    <ligand>
        <name>[4Fe-4S] cluster</name>
        <dbReference type="ChEBI" id="CHEBI:49883"/>
        <label>1</label>
    </ligand>
</feature>
<keyword id="KW-0004">4Fe-4S</keyword>
<keyword id="KW-0408">Iron</keyword>
<keyword id="KW-0411">Iron-sulfur</keyword>
<keyword id="KW-0479">Metal-binding</keyword>
<keyword id="KW-0496">Mitochondrion</keyword>
<keyword id="KW-1185">Reference proteome</keyword>
<keyword id="KW-0949">S-adenosyl-L-methionine</keyword>
<keyword id="KW-0808">Transferase</keyword>
<keyword id="KW-0809">Transit peptide</keyword>
<sequence length="422" mass="46127">MAASSTRLRCLYASSAPAWKKSPSQSIISLSRHYATTSSTTPSLNPDESSSSSSSTIPKRRKTTTFRDKLNAGPSFADFVTGGNGNNASLDPEEAYALEKVMIPGPAGRKKEHTRLPSWLKTPIPDSTNYKRIKKDLRGLDLHTVCEEARCPNISDCWGGSDKSAATATIMLMGDTCTRGCRFCSVKTLRTPGPLDPHEPENTAEALSRWGLGDDLPDGGAHHFAETVIKIKQKAPGILVECLTGDFAGDLDMVSLVAKSGLDVYAHNVETVEALTPHVRDRRATFKQSLRVLEAAKRAKPSLITKTSMMLGFGETEDQLWDALRQLRASNVDVVTFGQYMRPTKRHMAVHEYVTPDKFELWRQRALEMGFLYVASGPLVRSSYKAGEAFIENVLKKRRGVGNTPGAEVASAKDVPVDVLGK</sequence>
<name>LIPA_TALSN</name>
<protein>
    <recommendedName>
        <fullName evidence="1">Lipoyl synthase, mitochondrial</fullName>
        <ecNumber evidence="1">2.8.1.8</ecNumber>
    </recommendedName>
    <alternativeName>
        <fullName evidence="1">Lipoate synthase</fullName>
        <shortName evidence="1">LS</shortName>
        <shortName evidence="1">Lip-syn</shortName>
    </alternativeName>
    <alternativeName>
        <fullName evidence="1">Lipoic acid synthase</fullName>
    </alternativeName>
</protein>
<organism>
    <name type="scientific">Talaromyces stipitatus (strain ATCC 10500 / CBS 375.48 / QM 6759 / NRRL 1006)</name>
    <name type="common">Penicillium stipitatum</name>
    <dbReference type="NCBI Taxonomy" id="441959"/>
    <lineage>
        <taxon>Eukaryota</taxon>
        <taxon>Fungi</taxon>
        <taxon>Dikarya</taxon>
        <taxon>Ascomycota</taxon>
        <taxon>Pezizomycotina</taxon>
        <taxon>Eurotiomycetes</taxon>
        <taxon>Eurotiomycetidae</taxon>
        <taxon>Eurotiales</taxon>
        <taxon>Trichocomaceae</taxon>
        <taxon>Talaromyces</taxon>
        <taxon>Talaromyces sect. Talaromyces</taxon>
    </lineage>
</organism>
<dbReference type="EC" id="2.8.1.8" evidence="1"/>
<dbReference type="EMBL" id="EQ962658">
    <property type="protein sequence ID" value="EED13871.1"/>
    <property type="molecule type" value="Genomic_DNA"/>
</dbReference>
<dbReference type="RefSeq" id="XP_002486109.1">
    <property type="nucleotide sequence ID" value="XM_002486064.1"/>
</dbReference>
<dbReference type="SMR" id="B8MLU5"/>
<dbReference type="FunCoup" id="B8MLU5">
    <property type="interactions" value="577"/>
</dbReference>
<dbReference type="STRING" id="441959.B8MLU5"/>
<dbReference type="GeneID" id="8101799"/>
<dbReference type="VEuPathDB" id="FungiDB:TSTA_101110"/>
<dbReference type="eggNOG" id="KOG2672">
    <property type="taxonomic scope" value="Eukaryota"/>
</dbReference>
<dbReference type="HOGENOM" id="CLU_033144_0_1_1"/>
<dbReference type="InParanoid" id="B8MLU5"/>
<dbReference type="OMA" id="PYCDIDF"/>
<dbReference type="OrthoDB" id="3231at2759"/>
<dbReference type="PhylomeDB" id="B8MLU5"/>
<dbReference type="UniPathway" id="UPA00538">
    <property type="reaction ID" value="UER00593"/>
</dbReference>
<dbReference type="Proteomes" id="UP000001745">
    <property type="component" value="Unassembled WGS sequence"/>
</dbReference>
<dbReference type="GO" id="GO:0005739">
    <property type="term" value="C:mitochondrion"/>
    <property type="evidence" value="ECO:0007669"/>
    <property type="project" value="UniProtKB-SubCell"/>
</dbReference>
<dbReference type="GO" id="GO:0051539">
    <property type="term" value="F:4 iron, 4 sulfur cluster binding"/>
    <property type="evidence" value="ECO:0007669"/>
    <property type="project" value="UniProtKB-UniRule"/>
</dbReference>
<dbReference type="GO" id="GO:0016992">
    <property type="term" value="F:lipoate synthase activity"/>
    <property type="evidence" value="ECO:0007669"/>
    <property type="project" value="UniProtKB-UniRule"/>
</dbReference>
<dbReference type="GO" id="GO:0046872">
    <property type="term" value="F:metal ion binding"/>
    <property type="evidence" value="ECO:0007669"/>
    <property type="project" value="UniProtKB-KW"/>
</dbReference>
<dbReference type="CDD" id="cd01335">
    <property type="entry name" value="Radical_SAM"/>
    <property type="match status" value="1"/>
</dbReference>
<dbReference type="Gene3D" id="3.20.20.70">
    <property type="entry name" value="Aldolase class I"/>
    <property type="match status" value="1"/>
</dbReference>
<dbReference type="HAMAP" id="MF_00206">
    <property type="entry name" value="Lipoyl_synth"/>
    <property type="match status" value="1"/>
</dbReference>
<dbReference type="InterPro" id="IPR013785">
    <property type="entry name" value="Aldolase_TIM"/>
</dbReference>
<dbReference type="InterPro" id="IPR006638">
    <property type="entry name" value="Elp3/MiaA/NifB-like_rSAM"/>
</dbReference>
<dbReference type="InterPro" id="IPR031691">
    <property type="entry name" value="LIAS_N"/>
</dbReference>
<dbReference type="InterPro" id="IPR003698">
    <property type="entry name" value="Lipoyl_synth"/>
</dbReference>
<dbReference type="InterPro" id="IPR007197">
    <property type="entry name" value="rSAM"/>
</dbReference>
<dbReference type="NCBIfam" id="TIGR00510">
    <property type="entry name" value="lipA"/>
    <property type="match status" value="1"/>
</dbReference>
<dbReference type="NCBIfam" id="NF004019">
    <property type="entry name" value="PRK05481.1"/>
    <property type="match status" value="1"/>
</dbReference>
<dbReference type="NCBIfam" id="NF009544">
    <property type="entry name" value="PRK12928.1"/>
    <property type="match status" value="1"/>
</dbReference>
<dbReference type="PANTHER" id="PTHR10949">
    <property type="entry name" value="LIPOYL SYNTHASE"/>
    <property type="match status" value="1"/>
</dbReference>
<dbReference type="PANTHER" id="PTHR10949:SF0">
    <property type="entry name" value="LIPOYL SYNTHASE, MITOCHONDRIAL"/>
    <property type="match status" value="1"/>
</dbReference>
<dbReference type="Pfam" id="PF16881">
    <property type="entry name" value="LIAS_N"/>
    <property type="match status" value="1"/>
</dbReference>
<dbReference type="Pfam" id="PF04055">
    <property type="entry name" value="Radical_SAM"/>
    <property type="match status" value="1"/>
</dbReference>
<dbReference type="SFLD" id="SFLDF00271">
    <property type="entry name" value="lipoyl_synthase"/>
    <property type="match status" value="1"/>
</dbReference>
<dbReference type="SFLD" id="SFLDS00029">
    <property type="entry name" value="Radical_SAM"/>
    <property type="match status" value="1"/>
</dbReference>
<dbReference type="SMART" id="SM00729">
    <property type="entry name" value="Elp3"/>
    <property type="match status" value="1"/>
</dbReference>
<dbReference type="SUPFAM" id="SSF102114">
    <property type="entry name" value="Radical SAM enzymes"/>
    <property type="match status" value="1"/>
</dbReference>
<dbReference type="PROSITE" id="PS51918">
    <property type="entry name" value="RADICAL_SAM"/>
    <property type="match status" value="1"/>
</dbReference>
<reference key="1">
    <citation type="journal article" date="2015" name="Genome Announc.">
        <title>Genome sequence of the AIDS-associated pathogen Penicillium marneffei (ATCC18224) and its near taxonomic relative Talaromyces stipitatus (ATCC10500).</title>
        <authorList>
            <person name="Nierman W.C."/>
            <person name="Fedorova-Abrams N.D."/>
            <person name="Andrianopoulos A."/>
        </authorList>
    </citation>
    <scope>NUCLEOTIDE SEQUENCE [LARGE SCALE GENOMIC DNA]</scope>
    <source>
        <strain>ATCC 10500 / CBS 375.48 / QM 6759 / NRRL 1006</strain>
    </source>
</reference>
<accession>B8MLU5</accession>
<gene>
    <name type="ORF">TSTA_101110</name>
</gene>